<feature type="chain" id="PRO_1000081251" description="Glucose-6-phosphate isomerase">
    <location>
        <begin position="1"/>
        <end position="545"/>
    </location>
</feature>
<feature type="active site" description="Proton donor" evidence="1">
    <location>
        <position position="351"/>
    </location>
</feature>
<feature type="active site" evidence="1">
    <location>
        <position position="382"/>
    </location>
</feature>
<feature type="active site" evidence="1">
    <location>
        <position position="510"/>
    </location>
</feature>
<name>G6PI_SHESH</name>
<dbReference type="EC" id="5.3.1.9" evidence="1"/>
<dbReference type="EMBL" id="CP000821">
    <property type="protein sequence ID" value="ABV35795.1"/>
    <property type="molecule type" value="Genomic_DNA"/>
</dbReference>
<dbReference type="RefSeq" id="WP_012141531.1">
    <property type="nucleotide sequence ID" value="NC_009831.1"/>
</dbReference>
<dbReference type="SMR" id="A8FSH2"/>
<dbReference type="STRING" id="425104.Ssed_1184"/>
<dbReference type="KEGG" id="sse:Ssed_1184"/>
<dbReference type="eggNOG" id="COG0166">
    <property type="taxonomic scope" value="Bacteria"/>
</dbReference>
<dbReference type="HOGENOM" id="CLU_017947_3_1_6"/>
<dbReference type="OrthoDB" id="140919at2"/>
<dbReference type="UniPathway" id="UPA00109">
    <property type="reaction ID" value="UER00181"/>
</dbReference>
<dbReference type="UniPathway" id="UPA00138"/>
<dbReference type="Proteomes" id="UP000002015">
    <property type="component" value="Chromosome"/>
</dbReference>
<dbReference type="GO" id="GO:0005829">
    <property type="term" value="C:cytosol"/>
    <property type="evidence" value="ECO:0007669"/>
    <property type="project" value="TreeGrafter"/>
</dbReference>
<dbReference type="GO" id="GO:0097367">
    <property type="term" value="F:carbohydrate derivative binding"/>
    <property type="evidence" value="ECO:0007669"/>
    <property type="project" value="InterPro"/>
</dbReference>
<dbReference type="GO" id="GO:0004347">
    <property type="term" value="F:glucose-6-phosphate isomerase activity"/>
    <property type="evidence" value="ECO:0007669"/>
    <property type="project" value="UniProtKB-UniRule"/>
</dbReference>
<dbReference type="GO" id="GO:0048029">
    <property type="term" value="F:monosaccharide binding"/>
    <property type="evidence" value="ECO:0007669"/>
    <property type="project" value="TreeGrafter"/>
</dbReference>
<dbReference type="GO" id="GO:0006094">
    <property type="term" value="P:gluconeogenesis"/>
    <property type="evidence" value="ECO:0007669"/>
    <property type="project" value="UniProtKB-UniRule"/>
</dbReference>
<dbReference type="GO" id="GO:0051156">
    <property type="term" value="P:glucose 6-phosphate metabolic process"/>
    <property type="evidence" value="ECO:0007669"/>
    <property type="project" value="TreeGrafter"/>
</dbReference>
<dbReference type="GO" id="GO:0006096">
    <property type="term" value="P:glycolytic process"/>
    <property type="evidence" value="ECO:0007669"/>
    <property type="project" value="UniProtKB-UniRule"/>
</dbReference>
<dbReference type="CDD" id="cd05015">
    <property type="entry name" value="SIS_PGI_1"/>
    <property type="match status" value="1"/>
</dbReference>
<dbReference type="CDD" id="cd05016">
    <property type="entry name" value="SIS_PGI_2"/>
    <property type="match status" value="1"/>
</dbReference>
<dbReference type="FunFam" id="3.40.50.10490:FF:000018">
    <property type="entry name" value="Glucose-6-phosphate isomerase"/>
    <property type="match status" value="1"/>
</dbReference>
<dbReference type="Gene3D" id="1.10.1390.10">
    <property type="match status" value="1"/>
</dbReference>
<dbReference type="Gene3D" id="3.40.50.10490">
    <property type="entry name" value="Glucose-6-phosphate isomerase like protein, domain 1"/>
    <property type="match status" value="2"/>
</dbReference>
<dbReference type="HAMAP" id="MF_00473">
    <property type="entry name" value="G6P_isomerase"/>
    <property type="match status" value="1"/>
</dbReference>
<dbReference type="InterPro" id="IPR001672">
    <property type="entry name" value="G6P_Isomerase"/>
</dbReference>
<dbReference type="InterPro" id="IPR023096">
    <property type="entry name" value="G6P_Isomerase_C"/>
</dbReference>
<dbReference type="InterPro" id="IPR018189">
    <property type="entry name" value="Phosphoglucose_isomerase_CS"/>
</dbReference>
<dbReference type="InterPro" id="IPR046348">
    <property type="entry name" value="SIS_dom_sf"/>
</dbReference>
<dbReference type="InterPro" id="IPR035476">
    <property type="entry name" value="SIS_PGI_1"/>
</dbReference>
<dbReference type="InterPro" id="IPR035482">
    <property type="entry name" value="SIS_PGI_2"/>
</dbReference>
<dbReference type="NCBIfam" id="NF001211">
    <property type="entry name" value="PRK00179.1"/>
    <property type="match status" value="1"/>
</dbReference>
<dbReference type="PANTHER" id="PTHR11469">
    <property type="entry name" value="GLUCOSE-6-PHOSPHATE ISOMERASE"/>
    <property type="match status" value="1"/>
</dbReference>
<dbReference type="PANTHER" id="PTHR11469:SF1">
    <property type="entry name" value="GLUCOSE-6-PHOSPHATE ISOMERASE"/>
    <property type="match status" value="1"/>
</dbReference>
<dbReference type="Pfam" id="PF00342">
    <property type="entry name" value="PGI"/>
    <property type="match status" value="1"/>
</dbReference>
<dbReference type="PRINTS" id="PR00662">
    <property type="entry name" value="G6PISOMERASE"/>
</dbReference>
<dbReference type="SUPFAM" id="SSF53697">
    <property type="entry name" value="SIS domain"/>
    <property type="match status" value="1"/>
</dbReference>
<dbReference type="PROSITE" id="PS00765">
    <property type="entry name" value="P_GLUCOSE_ISOMERASE_1"/>
    <property type="match status" value="1"/>
</dbReference>
<dbReference type="PROSITE" id="PS00174">
    <property type="entry name" value="P_GLUCOSE_ISOMERASE_2"/>
    <property type="match status" value="1"/>
</dbReference>
<dbReference type="PROSITE" id="PS51463">
    <property type="entry name" value="P_GLUCOSE_ISOMERASE_3"/>
    <property type="match status" value="1"/>
</dbReference>
<protein>
    <recommendedName>
        <fullName evidence="1">Glucose-6-phosphate isomerase</fullName>
        <shortName evidence="1">GPI</shortName>
        <ecNumber evidence="1">5.3.1.9</ecNumber>
    </recommendedName>
    <alternativeName>
        <fullName evidence="1">Phosphoglucose isomerase</fullName>
        <shortName evidence="1">PGI</shortName>
    </alternativeName>
    <alternativeName>
        <fullName evidence="1">Phosphohexose isomerase</fullName>
        <shortName evidence="1">PHI</shortName>
    </alternativeName>
</protein>
<sequence length="545" mass="60240">MTELTQGKAWKTLEAHTQALPHMRALFEADTKRFDNMSTSACGLFLDYSKNRANKETMSLLFSVAEDAQLESKIKAMFNGEMINTTEKRAVLHTALRAKPEQEIMLNGVNIVQEVQETQQQMELFVDAVSSGNWKGYTGKKITDIVSIGIGGSFLGPKIVSQALRPYWSKQLNCHFVANVDASSIVEKLKPLNAETTLFIMSSKSFGTQETLTNTLSAKDWFIEQGGSQADVAKHFVAVTSNVEKATEFGIDADNIFPMWDWVGGRYSLWSAIGLPIALLVGMDNFRALLSGANEMDQHFANTPLSENMPVIMGLFSLLYGNFHDAQSHVVLTYDHYLRGLPAYFQQLDMESNGKSVTLDGTEVDHSTGPVIWGGEGTNGQHAYHQLLHQGTALIPADFIMPLQSHNPLGEHHVQLASNCFGQTQALMQGRSYEEALKELAGSKLPADEKSVIAKHKVMQGNKPSNTILMDKLTPTTLGALIALYEHRTFVQGAIWQINSFDQWGVELGKTLGNDVLDRLSAENDATELDCSSNGLINMFRQKKI</sequence>
<proteinExistence type="inferred from homology"/>
<evidence type="ECO:0000255" key="1">
    <source>
        <dbReference type="HAMAP-Rule" id="MF_00473"/>
    </source>
</evidence>
<reference key="1">
    <citation type="submission" date="2007-08" db="EMBL/GenBank/DDBJ databases">
        <title>Complete sequence of Shewanella sediminis HAW-EB3.</title>
        <authorList>
            <consortium name="US DOE Joint Genome Institute"/>
            <person name="Copeland A."/>
            <person name="Lucas S."/>
            <person name="Lapidus A."/>
            <person name="Barry K."/>
            <person name="Glavina del Rio T."/>
            <person name="Dalin E."/>
            <person name="Tice H."/>
            <person name="Pitluck S."/>
            <person name="Chertkov O."/>
            <person name="Brettin T."/>
            <person name="Bruce D."/>
            <person name="Detter J.C."/>
            <person name="Han C."/>
            <person name="Schmutz J."/>
            <person name="Larimer F."/>
            <person name="Land M."/>
            <person name="Hauser L."/>
            <person name="Kyrpides N."/>
            <person name="Kim E."/>
            <person name="Zhao J.-S."/>
            <person name="Richardson P."/>
        </authorList>
    </citation>
    <scope>NUCLEOTIDE SEQUENCE [LARGE SCALE GENOMIC DNA]</scope>
    <source>
        <strain>HAW-EB3</strain>
    </source>
</reference>
<comment type="function">
    <text evidence="1">Catalyzes the reversible isomerization of glucose-6-phosphate to fructose-6-phosphate.</text>
</comment>
<comment type="catalytic activity">
    <reaction evidence="1">
        <text>alpha-D-glucose 6-phosphate = beta-D-fructose 6-phosphate</text>
        <dbReference type="Rhea" id="RHEA:11816"/>
        <dbReference type="ChEBI" id="CHEBI:57634"/>
        <dbReference type="ChEBI" id="CHEBI:58225"/>
        <dbReference type="EC" id="5.3.1.9"/>
    </reaction>
</comment>
<comment type="pathway">
    <text evidence="1">Carbohydrate biosynthesis; gluconeogenesis.</text>
</comment>
<comment type="pathway">
    <text evidence="1">Carbohydrate degradation; glycolysis; D-glyceraldehyde 3-phosphate and glycerone phosphate from D-glucose: step 2/4.</text>
</comment>
<comment type="subcellular location">
    <subcellularLocation>
        <location evidence="1">Cytoplasm</location>
    </subcellularLocation>
</comment>
<comment type="similarity">
    <text evidence="1">Belongs to the GPI family.</text>
</comment>
<keyword id="KW-0963">Cytoplasm</keyword>
<keyword id="KW-0312">Gluconeogenesis</keyword>
<keyword id="KW-0324">Glycolysis</keyword>
<keyword id="KW-0413">Isomerase</keyword>
<keyword id="KW-1185">Reference proteome</keyword>
<gene>
    <name evidence="1" type="primary">pgi</name>
    <name type="ordered locus">Ssed_1184</name>
</gene>
<accession>A8FSH2</accession>
<organism>
    <name type="scientific">Shewanella sediminis (strain HAW-EB3)</name>
    <dbReference type="NCBI Taxonomy" id="425104"/>
    <lineage>
        <taxon>Bacteria</taxon>
        <taxon>Pseudomonadati</taxon>
        <taxon>Pseudomonadota</taxon>
        <taxon>Gammaproteobacteria</taxon>
        <taxon>Alteromonadales</taxon>
        <taxon>Shewanellaceae</taxon>
        <taxon>Shewanella</taxon>
    </lineage>
</organism>